<reference key="1">
    <citation type="submission" date="1993-06" db="EMBL/GenBank/DDBJ databases">
        <authorList>
            <person name="Mergaert P."/>
            <person name="D'Haeze W."/>
            <person name="Fernandez-Lopez M."/>
            <person name="Geelen D."/>
            <person name="Goethals K."/>
            <person name="Prome J.-C."/>
            <person name="van Montagu M."/>
            <person name="Holsters M."/>
        </authorList>
    </citation>
    <scope>NUCLEOTIDE SEQUENCE [GENOMIC DNA]</scope>
</reference>
<reference key="2">
    <citation type="submission" date="2007-04" db="EMBL/GenBank/DDBJ databases">
        <title>Complete genome sequence of the nitrogen-fixing bacterium Azorhizobium caulinodans ORS571.</title>
        <authorList>
            <person name="Lee K.B."/>
            <person name="Backer P.D."/>
            <person name="Aono T."/>
            <person name="Liu C.T."/>
            <person name="Suzuki S."/>
            <person name="Suzuki T."/>
            <person name="Kaneko T."/>
            <person name="Yamada M."/>
            <person name="Tabata S."/>
            <person name="Kupfer D.M."/>
            <person name="Najar F.Z."/>
            <person name="Wiley G.B."/>
            <person name="Roe B."/>
            <person name="Binnewies T."/>
            <person name="Ussery D."/>
            <person name="Vereecke D."/>
            <person name="Gevers D."/>
            <person name="Holsters M."/>
            <person name="Oyaizu H."/>
        </authorList>
    </citation>
    <scope>NUCLEOTIDE SEQUENCE [LARGE SCALE GENOMIC DNA]</scope>
    <source>
        <strain>ATCC 43989 / DSM 5975 / JCM 20966 / LMG 6465 / NBRC 14845 / NCIMB 13405 / ORS 571</strain>
    </source>
</reference>
<dbReference type="EMBL" id="L18897">
    <property type="protein sequence ID" value="AAB51170.1"/>
    <property type="molecule type" value="Genomic_DNA"/>
</dbReference>
<dbReference type="EMBL" id="AP009384">
    <property type="protein sequence ID" value="BAF89808.1"/>
    <property type="molecule type" value="Genomic_DNA"/>
</dbReference>
<dbReference type="RefSeq" id="WP_012172333.1">
    <property type="nucleotide sequence ID" value="NC_009937.1"/>
</dbReference>
<dbReference type="SMR" id="Q43967"/>
<dbReference type="STRING" id="438753.AZC_3810"/>
<dbReference type="KEGG" id="azc:AZC_3810"/>
<dbReference type="eggNOG" id="COG0382">
    <property type="taxonomic scope" value="Bacteria"/>
</dbReference>
<dbReference type="HOGENOM" id="CLU_029423_1_0_5"/>
<dbReference type="Proteomes" id="UP000000270">
    <property type="component" value="Chromosome"/>
</dbReference>
<dbReference type="GO" id="GO:0005886">
    <property type="term" value="C:plasma membrane"/>
    <property type="evidence" value="ECO:0007669"/>
    <property type="project" value="UniProtKB-SubCell"/>
</dbReference>
<dbReference type="GO" id="GO:0016765">
    <property type="term" value="F:transferase activity, transferring alkyl or aryl (other than methyl) groups"/>
    <property type="evidence" value="ECO:0007669"/>
    <property type="project" value="InterPro"/>
</dbReference>
<dbReference type="CDD" id="cd13963">
    <property type="entry name" value="PT_UbiA_2"/>
    <property type="match status" value="1"/>
</dbReference>
<dbReference type="Gene3D" id="1.10.357.140">
    <property type="entry name" value="UbiA prenyltransferase"/>
    <property type="match status" value="1"/>
</dbReference>
<dbReference type="InterPro" id="IPR000537">
    <property type="entry name" value="UbiA_prenyltransferase"/>
</dbReference>
<dbReference type="InterPro" id="IPR044878">
    <property type="entry name" value="UbiA_sf"/>
</dbReference>
<dbReference type="Pfam" id="PF01040">
    <property type="entry name" value="UbiA"/>
    <property type="match status" value="1"/>
</dbReference>
<organism>
    <name type="scientific">Azorhizobium caulinodans (strain ATCC 43989 / DSM 5975 / JCM 20966 / LMG 6465 / NBRC 14845 / NCIMB 13405 / ORS 571)</name>
    <dbReference type="NCBI Taxonomy" id="438753"/>
    <lineage>
        <taxon>Bacteria</taxon>
        <taxon>Pseudomonadati</taxon>
        <taxon>Pseudomonadota</taxon>
        <taxon>Alphaproteobacteria</taxon>
        <taxon>Hyphomicrobiales</taxon>
        <taxon>Xanthobacteraceae</taxon>
        <taxon>Azorhizobium</taxon>
    </lineage>
</organism>
<sequence>MWNKEWAAKIPFMTYCEACRPHHWLKNGLLFVPVLICGRAEDLLQAPLWLAFMTFCSVASGIYVLNDLMDRAHDRRHPSKRHRPFASRKLSGLTGVWMCLVLIALGGVCAINCGERLFAITASYVALSVIYVGKVRGEYVLDLFVLSALYTTRILAGATAANIPVPASFLAFSAMAFVSLASIKRLNELTQLRRDGAPDLYGRGYELSDHSIVALICVSAGYAAVVFLELFVQMSSVAQGPAPIFVSNAMCVVVAYWISRAVVQAHRGDMRSDTLCYAVTDGSSLVCILGLALGLVFLMYCRSQSIG</sequence>
<protein>
    <recommendedName>
        <fullName>Nodulation protein NoeC</fullName>
    </recommendedName>
</protein>
<feature type="chain" id="PRO_0000096922" description="Nodulation protein NoeC">
    <location>
        <begin position="1"/>
        <end position="307"/>
    </location>
</feature>
<feature type="transmembrane region" description="Helical" evidence="1">
    <location>
        <begin position="46"/>
        <end position="66"/>
    </location>
</feature>
<feature type="transmembrane region" description="Helical" evidence="1">
    <location>
        <begin position="91"/>
        <end position="111"/>
    </location>
</feature>
<feature type="transmembrane region" description="Helical" evidence="1">
    <location>
        <begin position="117"/>
        <end position="137"/>
    </location>
</feature>
<feature type="transmembrane region" description="Helical" evidence="1">
    <location>
        <begin position="140"/>
        <end position="160"/>
    </location>
</feature>
<feature type="transmembrane region" description="Helical" evidence="1">
    <location>
        <begin position="163"/>
        <end position="183"/>
    </location>
</feature>
<feature type="transmembrane region" description="Helical" evidence="1">
    <location>
        <begin position="212"/>
        <end position="232"/>
    </location>
</feature>
<feature type="transmembrane region" description="Helical" evidence="1">
    <location>
        <begin position="238"/>
        <end position="258"/>
    </location>
</feature>
<feature type="transmembrane region" description="Helical" evidence="1">
    <location>
        <begin position="279"/>
        <end position="299"/>
    </location>
</feature>
<feature type="sequence conflict" description="In Ref. 1; AAB51170." evidence="2" ref="1">
    <original>A</original>
    <variation>P</variation>
    <location>
        <position position="7"/>
    </location>
</feature>
<comment type="subcellular location">
    <subcellularLocation>
        <location evidence="2">Cell membrane</location>
        <topology evidence="2">Multi-pass membrane protein</topology>
    </subcellularLocation>
</comment>
<keyword id="KW-1003">Cell membrane</keyword>
<keyword id="KW-0472">Membrane</keyword>
<keyword id="KW-0536">Nodulation</keyword>
<keyword id="KW-1185">Reference proteome</keyword>
<keyword id="KW-0812">Transmembrane</keyword>
<keyword id="KW-1133">Transmembrane helix</keyword>
<evidence type="ECO:0000255" key="1"/>
<evidence type="ECO:0000305" key="2"/>
<accession>Q43967</accession>
<accession>A8INZ1</accession>
<name>NOEC_AZOC5</name>
<gene>
    <name type="primary">noeC</name>
    <name type="ordered locus">AZC_3810</name>
</gene>
<proteinExistence type="predicted"/>